<proteinExistence type="inferred from homology"/>
<gene>
    <name type="primary">CCR4</name>
    <name type="ordered locus">CNG03790</name>
</gene>
<feature type="chain" id="PRO_0000290610" description="CCR4-Not complex 3'-5'-exoribonuclease subunit Ccr4">
    <location>
        <begin position="1"/>
        <end position="744"/>
    </location>
</feature>
<feature type="repeat" description="LRR 1">
    <location>
        <begin position="231"/>
        <end position="254"/>
    </location>
</feature>
<feature type="repeat" description="LRR 2">
    <location>
        <begin position="255"/>
        <end position="277"/>
    </location>
</feature>
<feature type="repeat" description="LRR 3">
    <location>
        <begin position="279"/>
        <end position="300"/>
    </location>
</feature>
<feature type="repeat" description="LRR 4">
    <location>
        <begin position="301"/>
        <end position="326"/>
    </location>
</feature>
<feature type="region of interest" description="Disordered" evidence="4">
    <location>
        <begin position="1"/>
        <end position="100"/>
    </location>
</feature>
<feature type="region of interest" description="Disordered" evidence="4">
    <location>
        <begin position="132"/>
        <end position="238"/>
    </location>
</feature>
<feature type="compositionally biased region" description="Polar residues" evidence="4">
    <location>
        <begin position="1"/>
        <end position="16"/>
    </location>
</feature>
<feature type="compositionally biased region" description="Polar residues" evidence="4">
    <location>
        <begin position="29"/>
        <end position="43"/>
    </location>
</feature>
<feature type="compositionally biased region" description="Gly residues" evidence="4">
    <location>
        <begin position="86"/>
        <end position="100"/>
    </location>
</feature>
<feature type="binding site" evidence="2">
    <location>
        <position position="440"/>
    </location>
    <ligand>
        <name>Mg(2+)</name>
        <dbReference type="ChEBI" id="CHEBI:18420"/>
    </ligand>
</feature>
<reference key="1">
    <citation type="journal article" date="2005" name="Science">
        <title>The genome of the basidiomycetous yeast and human pathogen Cryptococcus neoformans.</title>
        <authorList>
            <person name="Loftus B.J."/>
            <person name="Fung E."/>
            <person name="Roncaglia P."/>
            <person name="Rowley D."/>
            <person name="Amedeo P."/>
            <person name="Bruno D."/>
            <person name="Vamathevan J."/>
            <person name="Miranda M."/>
            <person name="Anderson I.J."/>
            <person name="Fraser J.A."/>
            <person name="Allen J.E."/>
            <person name="Bosdet I.E."/>
            <person name="Brent M.R."/>
            <person name="Chiu R."/>
            <person name="Doering T.L."/>
            <person name="Donlin M.J."/>
            <person name="D'Souza C.A."/>
            <person name="Fox D.S."/>
            <person name="Grinberg V."/>
            <person name="Fu J."/>
            <person name="Fukushima M."/>
            <person name="Haas B.J."/>
            <person name="Huang J.C."/>
            <person name="Janbon G."/>
            <person name="Jones S.J.M."/>
            <person name="Koo H.L."/>
            <person name="Krzywinski M.I."/>
            <person name="Kwon-Chung K.J."/>
            <person name="Lengeler K.B."/>
            <person name="Maiti R."/>
            <person name="Marra M.A."/>
            <person name="Marra R.E."/>
            <person name="Mathewson C.A."/>
            <person name="Mitchell T.G."/>
            <person name="Pertea M."/>
            <person name="Riggs F.R."/>
            <person name="Salzberg S.L."/>
            <person name="Schein J.E."/>
            <person name="Shvartsbeyn A."/>
            <person name="Shin H."/>
            <person name="Shumway M."/>
            <person name="Specht C.A."/>
            <person name="Suh B.B."/>
            <person name="Tenney A."/>
            <person name="Utterback T.R."/>
            <person name="Wickes B.L."/>
            <person name="Wortman J.R."/>
            <person name="Wye N.H."/>
            <person name="Kronstad J.W."/>
            <person name="Lodge J.K."/>
            <person name="Heitman J."/>
            <person name="Davis R.W."/>
            <person name="Fraser C.M."/>
            <person name="Hyman R.W."/>
        </authorList>
    </citation>
    <scope>NUCLEOTIDE SEQUENCE [LARGE SCALE GENOMIC DNA]</scope>
    <source>
        <strain>JEC21 / ATCC MYA-565</strain>
    </source>
</reference>
<accession>P0CP22</accession>
<accession>Q55PW8</accession>
<accession>Q5KDJ2</accession>
<protein>
    <recommendedName>
        <fullName evidence="5">CCR4-Not complex 3'-5'-exoribonuclease subunit Ccr4</fullName>
        <ecNumber>3.1.13.4</ecNumber>
    </recommendedName>
    <alternativeName>
        <fullName>Carbon catabolite repressor protein 4</fullName>
    </alternativeName>
    <alternativeName>
        <fullName>Cytoplasmic deadenylase</fullName>
    </alternativeName>
    <alternativeName>
        <fullName>Glucose-repressible alcohol dehydrogenase transcriptional effector</fullName>
    </alternativeName>
</protein>
<keyword id="KW-0963">Cytoplasm</keyword>
<keyword id="KW-0269">Exonuclease</keyword>
<keyword id="KW-0378">Hydrolase</keyword>
<keyword id="KW-0433">Leucine-rich repeat</keyword>
<keyword id="KW-0460">Magnesium</keyword>
<keyword id="KW-0479">Metal-binding</keyword>
<keyword id="KW-0540">Nuclease</keyword>
<keyword id="KW-0539">Nucleus</keyword>
<keyword id="KW-1185">Reference proteome</keyword>
<keyword id="KW-0677">Repeat</keyword>
<keyword id="KW-0694">RNA-binding</keyword>
<keyword id="KW-0804">Transcription</keyword>
<keyword id="KW-0805">Transcription regulation</keyword>
<dbReference type="EC" id="3.1.13.4"/>
<dbReference type="EMBL" id="AE017347">
    <property type="protein sequence ID" value="AAW44776.1"/>
    <property type="molecule type" value="Genomic_DNA"/>
</dbReference>
<dbReference type="RefSeq" id="XP_572083.1">
    <property type="nucleotide sequence ID" value="XM_572083.1"/>
</dbReference>
<dbReference type="SMR" id="P0CP22"/>
<dbReference type="FunCoup" id="P0CP22">
    <property type="interactions" value="433"/>
</dbReference>
<dbReference type="STRING" id="214684.P0CP22"/>
<dbReference type="PaxDb" id="214684-P0CP22"/>
<dbReference type="EnsemblFungi" id="AAW44776">
    <property type="protein sequence ID" value="AAW44776"/>
    <property type="gene ID" value="CNG03790"/>
</dbReference>
<dbReference type="GeneID" id="3258689"/>
<dbReference type="KEGG" id="cne:CNG03790"/>
<dbReference type="VEuPathDB" id="FungiDB:CNG03790"/>
<dbReference type="eggNOG" id="KOG0620">
    <property type="taxonomic scope" value="Eukaryota"/>
</dbReference>
<dbReference type="HOGENOM" id="CLU_016428_4_0_1"/>
<dbReference type="InParanoid" id="P0CP22"/>
<dbReference type="OMA" id="PHYYARA"/>
<dbReference type="OrthoDB" id="428734at2759"/>
<dbReference type="PHI-base" id="PHI:9742"/>
<dbReference type="Proteomes" id="UP000002149">
    <property type="component" value="Chromosome 7"/>
</dbReference>
<dbReference type="GO" id="GO:0030015">
    <property type="term" value="C:CCR4-NOT core complex"/>
    <property type="evidence" value="ECO:0007669"/>
    <property type="project" value="EnsemblFungi"/>
</dbReference>
<dbReference type="GO" id="GO:0005634">
    <property type="term" value="C:nucleus"/>
    <property type="evidence" value="ECO:0007669"/>
    <property type="project" value="UniProtKB-SubCell"/>
</dbReference>
<dbReference type="GO" id="GO:0000932">
    <property type="term" value="C:P-body"/>
    <property type="evidence" value="ECO:0007669"/>
    <property type="project" value="EnsemblFungi"/>
</dbReference>
<dbReference type="GO" id="GO:0000175">
    <property type="term" value="F:3'-5'-RNA exonuclease activity"/>
    <property type="evidence" value="ECO:0000318"/>
    <property type="project" value="GO_Central"/>
</dbReference>
<dbReference type="GO" id="GO:0046872">
    <property type="term" value="F:metal ion binding"/>
    <property type="evidence" value="ECO:0007669"/>
    <property type="project" value="UniProtKB-KW"/>
</dbReference>
<dbReference type="GO" id="GO:0004535">
    <property type="term" value="F:poly(A)-specific ribonuclease activity"/>
    <property type="evidence" value="ECO:0007669"/>
    <property type="project" value="UniProtKB-EC"/>
</dbReference>
<dbReference type="GO" id="GO:0003723">
    <property type="term" value="F:RNA binding"/>
    <property type="evidence" value="ECO:0007669"/>
    <property type="project" value="UniProtKB-KW"/>
</dbReference>
<dbReference type="GO" id="GO:0000289">
    <property type="term" value="P:nuclear-transcribed mRNA poly(A) tail shortening"/>
    <property type="evidence" value="ECO:0007669"/>
    <property type="project" value="EnsemblFungi"/>
</dbReference>
<dbReference type="CDD" id="cd09097">
    <property type="entry name" value="Deadenylase_CCR4"/>
    <property type="match status" value="1"/>
</dbReference>
<dbReference type="FunFam" id="3.60.10.10:FF:000002">
    <property type="entry name" value="CCR4-NOT transcription complex subunit 6 like"/>
    <property type="match status" value="1"/>
</dbReference>
<dbReference type="FunFam" id="3.80.10.10:FF:000705">
    <property type="entry name" value="Glucose-repressible alcohol dehydrogenase transcriptional effector"/>
    <property type="match status" value="1"/>
</dbReference>
<dbReference type="Gene3D" id="3.60.10.10">
    <property type="entry name" value="Endonuclease/exonuclease/phosphatase"/>
    <property type="match status" value="1"/>
</dbReference>
<dbReference type="Gene3D" id="3.80.10.10">
    <property type="entry name" value="Ribonuclease Inhibitor"/>
    <property type="match status" value="1"/>
</dbReference>
<dbReference type="InterPro" id="IPR050410">
    <property type="entry name" value="CCR4/nocturin_mRNA_transcr"/>
</dbReference>
<dbReference type="InterPro" id="IPR036691">
    <property type="entry name" value="Endo/exonu/phosph_ase_sf"/>
</dbReference>
<dbReference type="InterPro" id="IPR005135">
    <property type="entry name" value="Endo/exonuclease/phosphatase"/>
</dbReference>
<dbReference type="InterPro" id="IPR001611">
    <property type="entry name" value="Leu-rich_rpt"/>
</dbReference>
<dbReference type="InterPro" id="IPR003591">
    <property type="entry name" value="Leu-rich_rpt_typical-subtyp"/>
</dbReference>
<dbReference type="InterPro" id="IPR032675">
    <property type="entry name" value="LRR_dom_sf"/>
</dbReference>
<dbReference type="PANTHER" id="PTHR12121">
    <property type="entry name" value="CARBON CATABOLITE REPRESSOR PROTEIN 4"/>
    <property type="match status" value="1"/>
</dbReference>
<dbReference type="PANTHER" id="PTHR12121:SF100">
    <property type="entry name" value="POLY(A)-SPECIFIC RIBONUCLEASE"/>
    <property type="match status" value="1"/>
</dbReference>
<dbReference type="Pfam" id="PF03372">
    <property type="entry name" value="Exo_endo_phos"/>
    <property type="match status" value="1"/>
</dbReference>
<dbReference type="Pfam" id="PF13855">
    <property type="entry name" value="LRR_8"/>
    <property type="match status" value="1"/>
</dbReference>
<dbReference type="SMART" id="SM00369">
    <property type="entry name" value="LRR_TYP"/>
    <property type="match status" value="3"/>
</dbReference>
<dbReference type="SUPFAM" id="SSF56219">
    <property type="entry name" value="DNase I-like"/>
    <property type="match status" value="1"/>
</dbReference>
<dbReference type="SUPFAM" id="SSF52058">
    <property type="entry name" value="L domain-like"/>
    <property type="match status" value="1"/>
</dbReference>
<name>CCR4_CRYNJ</name>
<sequence>MFYPHHQSQQSTTTNPSKHHDSQDVRLPGTSSWSRHPSHPSFTPSLPMPSPSGYPPLGSGYPPGGHHHPNVNVHSGIHGPHPSFGSGMGGNGGMGHGQGFGMGMFQNGVQTSPPRGEPVPMTSHWQTQMMRAEASRSASSPHHRARAAAISSRATNKPSAVPIVDPNNRPSSSYGTNGLHRKNASSVFNGEPTGTPPLSDPSLTPAQNPAEPATPAPVAGQTESKDEEKPNEPWTGLDLGGIRLKRLSTALFSFTHVTSLYINHNALTSIPSAISSLRQLTLLDATGNELSTIPSEIGVLSKLKDLLLFDNNLTTLPFELGTLYQLDCLGIDGNPMNADYRKKLVEDGTRGLITYLRDHAPPPPPPPERQWIDLETDVDTPTSGKQESFSVLTYNILCASFAPATTYSYTPSWALDWDYRKRLLLEEIVTASADVVCLQEIDCKQYADYFYPMLKKEGYEGQHYPRSRAKTMSVDEQKLVDGCATFWKEEKFRLVETQVIEFNQLALQKTDMRTEDMFNRVMSRDNIAVVAALEFRASGGRLLVANSHIYWDHRYRDVKLVQIGMLMEELEKIVEQFSRYPVKLDTDPEYNNGKPPKYERSEKGRDIPLIMCVDLNSFSGSAVYDYLSSGSIPGDHEDFMSHLYGRYTASGLKHHLGLRSACAGIGEMRMTNFTPTFAAAIDYVFYTPRTMKVTSVLGDVDKAYLDKTVGFPNAHFPSDHIPVFTQFRIKGHLDPLPLNGDPYH</sequence>
<evidence type="ECO:0000250" key="1"/>
<evidence type="ECO:0000250" key="2">
    <source>
        <dbReference type="UniProtKB" id="O95551"/>
    </source>
</evidence>
<evidence type="ECO:0000250" key="3">
    <source>
        <dbReference type="UniProtKB" id="P31384"/>
    </source>
</evidence>
<evidence type="ECO:0000256" key="4">
    <source>
        <dbReference type="SAM" id="MobiDB-lite"/>
    </source>
</evidence>
<evidence type="ECO:0000305" key="5"/>
<comment type="function">
    <text evidence="3">Acts as a catalytic component of the CCR4-NOT core complex, which in the nucleus seems to be a general transcription factor, and in the cytoplasm the major mRNA deadenylase involved in mRNA turnover (By similarity). Ccr4 has 3'-5' RNase activity with a strong preference for polyadenylated substrates and also low exonuclease activity towards single-stranded DNA (By similarity).</text>
</comment>
<comment type="catalytic activity">
    <reaction>
        <text>Exonucleolytic cleavage of poly(A) to 5'-AMP.</text>
        <dbReference type="EC" id="3.1.13.4"/>
    </reaction>
</comment>
<comment type="cofactor">
    <cofactor evidence="1">
        <name>Mg(2+)</name>
        <dbReference type="ChEBI" id="CHEBI:18420"/>
    </cofactor>
</comment>
<comment type="subcellular location">
    <subcellularLocation>
        <location evidence="1">Cytoplasm</location>
    </subcellularLocation>
    <subcellularLocation>
        <location evidence="1">Nucleus</location>
    </subcellularLocation>
</comment>
<comment type="similarity">
    <text evidence="5">Belongs to the CCR4/nocturin family.</text>
</comment>
<organism>
    <name type="scientific">Cryptococcus neoformans var. neoformans serotype D (strain JEC21 / ATCC MYA-565)</name>
    <name type="common">Filobasidiella neoformans</name>
    <dbReference type="NCBI Taxonomy" id="214684"/>
    <lineage>
        <taxon>Eukaryota</taxon>
        <taxon>Fungi</taxon>
        <taxon>Dikarya</taxon>
        <taxon>Basidiomycota</taxon>
        <taxon>Agaricomycotina</taxon>
        <taxon>Tremellomycetes</taxon>
        <taxon>Tremellales</taxon>
        <taxon>Cryptococcaceae</taxon>
        <taxon>Cryptococcus</taxon>
        <taxon>Cryptococcus neoformans species complex</taxon>
    </lineage>
</organism>